<protein>
    <recommendedName>
        <fullName>Laccase-4</fullName>
        <ecNumber evidence="2">1.10.3.2</ecNumber>
    </recommendedName>
    <alternativeName>
        <fullName>Benzenediol:oxygen oxidoreductase 4</fullName>
    </alternativeName>
    <alternativeName>
        <fullName>Diphenol oxidase 4</fullName>
    </alternativeName>
    <alternativeName>
        <fullName>Urishiol oxidase 4</fullName>
    </alternativeName>
</protein>
<sequence length="531" mass="57545">MLSSITLLPLLAAVSTPAFAAVRNYKFDIKNVNVAPDGFQRPIVSVNGLVPGTLITANKGDTLRINVTNQLTDPSMRRATTIHWHGLFQATTADEDGPAFVTQCPIAQNLSYTYEIPLHGQTGTMWYHAHLASQYVDGLRGPLVIYDPNDPHKSRYDVDDASTVVMLEDWYHTPAPVLEKQMFSTNNTALLSPVPDSGLINGKGRYVGGPAVPRSVINVKRGKRYRLRVINASAIGSFTFSIEGHRLTVIEADGIPHQPLPVDSFQIYAGQRYSVIVEANQTAANYWIRAPMTVAGAGTNANLDPTNVFAVLHYEGAPNAEPTTEQGSAIGTALVEENLHALINPGAPGGSAPADVSLNLAIGRSTVDGILRFTFNNIKYEAPSLPTLLKILANNASNDADFTPNEHTIVLPHNKVIGAQHHRGADHPIHLHGHVFDIVKSLGGTPNYVNPPRRDVVRVGGTGVVLRFKADNPGPWFVHCHIDCTWRLGSHLSLPRPPARFARVSSRSSPTMPGTSSAPSTRLFLPICSKW</sequence>
<name>LAC4_THACU</name>
<proteinExistence type="evidence at protein level"/>
<keyword id="KW-0186">Copper</keyword>
<keyword id="KW-0903">Direct protein sequencing</keyword>
<keyword id="KW-1015">Disulfide bond</keyword>
<keyword id="KW-0325">Glycoprotein</keyword>
<keyword id="KW-0439">Lignin degradation</keyword>
<keyword id="KW-0479">Metal-binding</keyword>
<keyword id="KW-0560">Oxidoreductase</keyword>
<keyword id="KW-0677">Repeat</keyword>
<keyword id="KW-0964">Secreted</keyword>
<keyword id="KW-0732">Signal</keyword>
<gene>
    <name type="primary">LCC4</name>
</gene>
<organism>
    <name type="scientific">Thanatephorus cucumeris</name>
    <name type="common">Black scurf of potato</name>
    <name type="synonym">Rhizoctonia solani</name>
    <dbReference type="NCBI Taxonomy" id="107832"/>
    <lineage>
        <taxon>Eukaryota</taxon>
        <taxon>Fungi</taxon>
        <taxon>Dikarya</taxon>
        <taxon>Basidiomycota</taxon>
        <taxon>Agaricomycotina</taxon>
        <taxon>Agaricomycetes</taxon>
        <taxon>Cantharellales</taxon>
        <taxon>Ceratobasidiaceae</taxon>
        <taxon>Thanatephorus</taxon>
    </lineage>
</organism>
<feature type="signal peptide">
    <location>
        <begin position="1"/>
        <end position="19"/>
    </location>
</feature>
<feature type="chain" id="PRO_0000002938" description="Laccase-4">
    <location>
        <begin position="20"/>
        <end position="531"/>
    </location>
</feature>
<feature type="domain" description="Plastocyanin-like 1">
    <location>
        <begin position="23"/>
        <end position="146"/>
    </location>
</feature>
<feature type="domain" description="Plastocyanin-like 2">
    <location>
        <begin position="158"/>
        <end position="315"/>
    </location>
</feature>
<feature type="domain" description="Plastocyanin-like 3">
    <location>
        <begin position="384"/>
        <end position="507"/>
    </location>
</feature>
<feature type="binding site" description="type 2 copper site" evidence="1">
    <location>
        <position position="83"/>
    </location>
    <ligand>
        <name>Cu cation</name>
        <dbReference type="ChEBI" id="CHEBI:23378"/>
        <label>1</label>
    </ligand>
</feature>
<feature type="binding site" description="type 3 copper site" evidence="1">
    <location>
        <position position="85"/>
    </location>
    <ligand>
        <name>Cu cation</name>
        <dbReference type="ChEBI" id="CHEBI:23378"/>
        <label>2</label>
    </ligand>
</feature>
<feature type="binding site" description="type 3 copper site" evidence="1">
    <location>
        <position position="128"/>
    </location>
    <ligand>
        <name>Cu cation</name>
        <dbReference type="ChEBI" id="CHEBI:23378"/>
        <label>2</label>
    </ligand>
</feature>
<feature type="binding site" description="type 3 copper site" evidence="1">
    <location>
        <position position="130"/>
    </location>
    <ligand>
        <name>Cu cation</name>
        <dbReference type="ChEBI" id="CHEBI:23378"/>
        <label>3</label>
    </ligand>
</feature>
<feature type="binding site" description="type 1 copper site" evidence="1">
    <location>
        <position position="427"/>
    </location>
    <ligand>
        <name>Cu cation</name>
        <dbReference type="ChEBI" id="CHEBI:23378"/>
        <label>4</label>
    </ligand>
</feature>
<feature type="binding site" description="type 2 copper site" evidence="1">
    <location>
        <position position="430"/>
    </location>
    <ligand>
        <name>Cu cation</name>
        <dbReference type="ChEBI" id="CHEBI:23378"/>
        <label>1</label>
    </ligand>
</feature>
<feature type="binding site" description="type 3 copper site" evidence="1">
    <location>
        <position position="432"/>
    </location>
    <ligand>
        <name>Cu cation</name>
        <dbReference type="ChEBI" id="CHEBI:23378"/>
        <label>3</label>
    </ligand>
</feature>
<feature type="binding site" description="type 3 copper site" evidence="1">
    <location>
        <position position="479"/>
    </location>
    <ligand>
        <name>Cu cation</name>
        <dbReference type="ChEBI" id="CHEBI:23378"/>
        <label>3</label>
    </ligand>
</feature>
<feature type="binding site" description="type 1 copper site" evidence="1">
    <location>
        <position position="480"/>
    </location>
    <ligand>
        <name>Cu cation</name>
        <dbReference type="ChEBI" id="CHEBI:23378"/>
        <label>4</label>
    </ligand>
</feature>
<feature type="binding site" description="type 3 copper site" evidence="1">
    <location>
        <position position="481"/>
    </location>
    <ligand>
        <name>Cu cation</name>
        <dbReference type="ChEBI" id="CHEBI:23378"/>
        <label>2</label>
    </ligand>
</feature>
<feature type="glycosylation site" description="N-linked (GlcNAc...) asparagine" evidence="4">
    <location>
        <position position="66"/>
    </location>
</feature>
<feature type="glycosylation site" description="N-linked (GlcNAc...) asparagine" evidence="4">
    <location>
        <position position="109"/>
    </location>
</feature>
<feature type="glycosylation site" description="N-linked (GlcNAc...) asparagine" evidence="4">
    <location>
        <position position="186"/>
    </location>
</feature>
<feature type="glycosylation site" description="N-linked (GlcNAc...) asparagine" evidence="4">
    <location>
        <position position="231"/>
    </location>
</feature>
<feature type="glycosylation site" description="N-linked (GlcNAc...) asparagine" evidence="4">
    <location>
        <position position="280"/>
    </location>
</feature>
<feature type="glycosylation site" description="N-linked (GlcNAc...) asparagine" evidence="4">
    <location>
        <position position="395"/>
    </location>
</feature>
<feature type="disulfide bond" evidence="2">
    <location>
        <begin position="104"/>
        <end position="528"/>
    </location>
</feature>
<feature type="sequence variant">
    <original>P</original>
    <variation>S</variation>
    <location>
        <position position="42"/>
    </location>
</feature>
<feature type="sequence variant">
    <original>H</original>
    <variation>R</variation>
    <location>
        <position position="119"/>
    </location>
</feature>
<feature type="sequence variant">
    <original>R</original>
    <variation>S</variation>
    <location>
        <position position="246"/>
    </location>
</feature>
<feature type="sequence variant">
    <original>P</original>
    <variation>L</variation>
    <location>
        <position position="256"/>
    </location>
</feature>
<feature type="sequence variant">
    <original>P</original>
    <variation>A</variation>
    <location>
        <position position="261"/>
    </location>
</feature>
<dbReference type="EC" id="1.10.3.2" evidence="2"/>
<dbReference type="EMBL" id="Z54277">
    <property type="protein sequence ID" value="CAA91042.1"/>
    <property type="molecule type" value="Genomic_DNA"/>
</dbReference>
<dbReference type="PIR" id="S68120">
    <property type="entry name" value="S68120"/>
</dbReference>
<dbReference type="SMR" id="Q02081"/>
<dbReference type="CAZy" id="AA1">
    <property type="family name" value="Auxiliary Activities 1"/>
</dbReference>
<dbReference type="GlyCosmos" id="Q02081">
    <property type="glycosylation" value="6 sites, No reported glycans"/>
</dbReference>
<dbReference type="GO" id="GO:0005576">
    <property type="term" value="C:extracellular region"/>
    <property type="evidence" value="ECO:0007669"/>
    <property type="project" value="UniProtKB-SubCell"/>
</dbReference>
<dbReference type="GO" id="GO:0005507">
    <property type="term" value="F:copper ion binding"/>
    <property type="evidence" value="ECO:0007669"/>
    <property type="project" value="InterPro"/>
</dbReference>
<dbReference type="GO" id="GO:0052716">
    <property type="term" value="F:hydroquinone:oxygen oxidoreductase activity"/>
    <property type="evidence" value="ECO:0007669"/>
    <property type="project" value="UniProtKB-EC"/>
</dbReference>
<dbReference type="GO" id="GO:0046274">
    <property type="term" value="P:lignin catabolic process"/>
    <property type="evidence" value="ECO:0007669"/>
    <property type="project" value="UniProtKB-KW"/>
</dbReference>
<dbReference type="CDD" id="cd13882">
    <property type="entry name" value="CuRO_2_Tv-LCC_like"/>
    <property type="match status" value="1"/>
</dbReference>
<dbReference type="CDD" id="cd13903">
    <property type="entry name" value="CuRO_3_Tv-LCC_like"/>
    <property type="match status" value="1"/>
</dbReference>
<dbReference type="FunFam" id="2.60.40.420:FF:000045">
    <property type="entry name" value="Laccase 2"/>
    <property type="match status" value="1"/>
</dbReference>
<dbReference type="Gene3D" id="2.60.40.420">
    <property type="entry name" value="Cupredoxins - blue copper proteins"/>
    <property type="match status" value="3"/>
</dbReference>
<dbReference type="InterPro" id="IPR011707">
    <property type="entry name" value="Cu-oxidase-like_N"/>
</dbReference>
<dbReference type="InterPro" id="IPR001117">
    <property type="entry name" value="Cu-oxidase_2nd"/>
</dbReference>
<dbReference type="InterPro" id="IPR011706">
    <property type="entry name" value="Cu-oxidase_C"/>
</dbReference>
<dbReference type="InterPro" id="IPR045087">
    <property type="entry name" value="Cu-oxidase_fam"/>
</dbReference>
<dbReference type="InterPro" id="IPR008972">
    <property type="entry name" value="Cupredoxin"/>
</dbReference>
<dbReference type="PANTHER" id="PTHR11709:SF511">
    <property type="entry name" value="LACCASE"/>
    <property type="match status" value="1"/>
</dbReference>
<dbReference type="PANTHER" id="PTHR11709">
    <property type="entry name" value="MULTI-COPPER OXIDASE"/>
    <property type="match status" value="1"/>
</dbReference>
<dbReference type="Pfam" id="PF00394">
    <property type="entry name" value="Cu-oxidase"/>
    <property type="match status" value="1"/>
</dbReference>
<dbReference type="Pfam" id="PF07731">
    <property type="entry name" value="Cu-oxidase_2"/>
    <property type="match status" value="1"/>
</dbReference>
<dbReference type="Pfam" id="PF07732">
    <property type="entry name" value="Cu-oxidase_3"/>
    <property type="match status" value="1"/>
</dbReference>
<dbReference type="SUPFAM" id="SSF49503">
    <property type="entry name" value="Cupredoxins"/>
    <property type="match status" value="3"/>
</dbReference>
<comment type="function">
    <text evidence="2">Lignin degradation and detoxification of lignin-derived products.</text>
</comment>
<comment type="catalytic activity">
    <reaction evidence="2">
        <text>4 hydroquinone + O2 = 4 benzosemiquinone + 2 H2O</text>
        <dbReference type="Rhea" id="RHEA:11276"/>
        <dbReference type="ChEBI" id="CHEBI:15377"/>
        <dbReference type="ChEBI" id="CHEBI:15379"/>
        <dbReference type="ChEBI" id="CHEBI:17594"/>
        <dbReference type="ChEBI" id="CHEBI:17977"/>
        <dbReference type="EC" id="1.10.3.2"/>
    </reaction>
</comment>
<comment type="cofactor">
    <cofactor evidence="2">
        <name>Cu cation</name>
        <dbReference type="ChEBI" id="CHEBI:23378"/>
    </cofactor>
    <text evidence="2">Binds 4 Cu cations per monomer.</text>
</comment>
<comment type="biophysicochemical properties">
    <phDependence>
        <text evidence="5">Optimum pH is 7.</text>
    </phDependence>
</comment>
<comment type="subunit">
    <text evidence="3">Homodimer.</text>
</comment>
<comment type="subcellular location">
    <subcellularLocation>
        <location evidence="2">Secreted</location>
    </subcellularLocation>
</comment>
<comment type="tissue specificity">
    <text evidence="5">In mycelia, at a higher level than LCC1, LCC2 and LCC3.</text>
</comment>
<comment type="similarity">
    <text evidence="6">Belongs to the multicopper oxidase family.</text>
</comment>
<evidence type="ECO:0000250" key="1">
    <source>
        <dbReference type="UniProtKB" id="D0VWU3"/>
    </source>
</evidence>
<evidence type="ECO:0000250" key="2">
    <source>
        <dbReference type="UniProtKB" id="Q70KY3"/>
    </source>
</evidence>
<evidence type="ECO:0000250" key="3">
    <source>
        <dbReference type="UniProtKB" id="Q99046"/>
    </source>
</evidence>
<evidence type="ECO:0000255" key="4"/>
<evidence type="ECO:0000269" key="5">
    <source>
    </source>
</evidence>
<evidence type="ECO:0000305" key="6"/>
<reference key="1">
    <citation type="journal article" date="1996" name="Curr. Genet.">
        <title>The identification and characterization of four laccases from the plant pathogenic fungus Rhizoctonia solani.</title>
        <authorList>
            <person name="Wahleithner J.A."/>
            <person name="Xu F."/>
            <person name="Brown K.M."/>
            <person name="Brown S.H."/>
            <person name="Golightly E.J."/>
            <person name="Halkier T."/>
            <person name="Kauppinen S."/>
            <person name="Pederson A."/>
            <person name="Schneider P."/>
        </authorList>
    </citation>
    <scope>NUCLEOTIDE SEQUENCE [GENOMIC DNA]</scope>
    <scope>PARTIAL PROTEIN SEQUENCE</scope>
    <scope>BIOPHYSICOCHEMICAL PROPERTIES</scope>
    <scope>TISSUE SPECIFICITY</scope>
    <source>
        <strain>R22 / IMI 358730 / AG-6</strain>
    </source>
</reference>
<accession>Q02081</accession>